<evidence type="ECO:0000255" key="1">
    <source>
        <dbReference type="HAMAP-Rule" id="MF_00090"/>
    </source>
</evidence>
<dbReference type="EC" id="2.1.1.77" evidence="1"/>
<dbReference type="EMBL" id="CP000931">
    <property type="protein sequence ID" value="ABZ75797.1"/>
    <property type="molecule type" value="Genomic_DNA"/>
</dbReference>
<dbReference type="RefSeq" id="WP_012276339.1">
    <property type="nucleotide sequence ID" value="NC_010334.1"/>
</dbReference>
<dbReference type="SMR" id="B0TK10"/>
<dbReference type="STRING" id="458817.Shal_1228"/>
<dbReference type="KEGG" id="shl:Shal_1228"/>
<dbReference type="eggNOG" id="COG2518">
    <property type="taxonomic scope" value="Bacteria"/>
</dbReference>
<dbReference type="HOGENOM" id="CLU_055432_2_0_6"/>
<dbReference type="OrthoDB" id="9810066at2"/>
<dbReference type="Proteomes" id="UP000001317">
    <property type="component" value="Chromosome"/>
</dbReference>
<dbReference type="GO" id="GO:0005737">
    <property type="term" value="C:cytoplasm"/>
    <property type="evidence" value="ECO:0007669"/>
    <property type="project" value="UniProtKB-SubCell"/>
</dbReference>
<dbReference type="GO" id="GO:0004719">
    <property type="term" value="F:protein-L-isoaspartate (D-aspartate) O-methyltransferase activity"/>
    <property type="evidence" value="ECO:0007669"/>
    <property type="project" value="UniProtKB-UniRule"/>
</dbReference>
<dbReference type="GO" id="GO:0032259">
    <property type="term" value="P:methylation"/>
    <property type="evidence" value="ECO:0007669"/>
    <property type="project" value="UniProtKB-KW"/>
</dbReference>
<dbReference type="GO" id="GO:0036211">
    <property type="term" value="P:protein modification process"/>
    <property type="evidence" value="ECO:0007669"/>
    <property type="project" value="UniProtKB-UniRule"/>
</dbReference>
<dbReference type="GO" id="GO:0030091">
    <property type="term" value="P:protein repair"/>
    <property type="evidence" value="ECO:0007669"/>
    <property type="project" value="UniProtKB-UniRule"/>
</dbReference>
<dbReference type="CDD" id="cd02440">
    <property type="entry name" value="AdoMet_MTases"/>
    <property type="match status" value="1"/>
</dbReference>
<dbReference type="FunFam" id="3.40.50.150:FF:000010">
    <property type="entry name" value="Protein-L-isoaspartate O-methyltransferase"/>
    <property type="match status" value="1"/>
</dbReference>
<dbReference type="Gene3D" id="3.40.50.150">
    <property type="entry name" value="Vaccinia Virus protein VP39"/>
    <property type="match status" value="1"/>
</dbReference>
<dbReference type="HAMAP" id="MF_00090">
    <property type="entry name" value="PIMT"/>
    <property type="match status" value="1"/>
</dbReference>
<dbReference type="InterPro" id="IPR000682">
    <property type="entry name" value="PCMT"/>
</dbReference>
<dbReference type="InterPro" id="IPR029063">
    <property type="entry name" value="SAM-dependent_MTases_sf"/>
</dbReference>
<dbReference type="NCBIfam" id="TIGR00080">
    <property type="entry name" value="pimt"/>
    <property type="match status" value="1"/>
</dbReference>
<dbReference type="NCBIfam" id="NF001453">
    <property type="entry name" value="PRK00312.1"/>
    <property type="match status" value="1"/>
</dbReference>
<dbReference type="PANTHER" id="PTHR11579">
    <property type="entry name" value="PROTEIN-L-ISOASPARTATE O-METHYLTRANSFERASE"/>
    <property type="match status" value="1"/>
</dbReference>
<dbReference type="PANTHER" id="PTHR11579:SF0">
    <property type="entry name" value="PROTEIN-L-ISOASPARTATE(D-ASPARTATE) O-METHYLTRANSFERASE"/>
    <property type="match status" value="1"/>
</dbReference>
<dbReference type="Pfam" id="PF01135">
    <property type="entry name" value="PCMT"/>
    <property type="match status" value="1"/>
</dbReference>
<dbReference type="SUPFAM" id="SSF53335">
    <property type="entry name" value="S-adenosyl-L-methionine-dependent methyltransferases"/>
    <property type="match status" value="1"/>
</dbReference>
<dbReference type="PROSITE" id="PS01279">
    <property type="entry name" value="PCMT"/>
    <property type="match status" value="1"/>
</dbReference>
<protein>
    <recommendedName>
        <fullName evidence="1">Protein-L-isoaspartate O-methyltransferase</fullName>
        <ecNumber evidence="1">2.1.1.77</ecNumber>
    </recommendedName>
    <alternativeName>
        <fullName evidence="1">L-isoaspartyl protein carboxyl methyltransferase</fullName>
    </alternativeName>
    <alternativeName>
        <fullName evidence="1">Protein L-isoaspartyl methyltransferase</fullName>
    </alternativeName>
    <alternativeName>
        <fullName evidence="1">Protein-beta-aspartate methyltransferase</fullName>
        <shortName evidence="1">PIMT</shortName>
    </alternativeName>
</protein>
<sequence length="211" mass="22866">MTPVASTSALNLARSLYEAGIRNEAVLQAVANTPREQFLDAALGHKAYENTALPIGQGQTISQPYIVAKMTEIILQTKPTKVLEIGTGSGYQAAILARLVPQLFTVERIKSLQIQARQRLKRLDLHNIAFKYGDGWEGWPSKGPYDAIMVTAAASSIPDALVSQLADGGILVIPVGEIAQQLLKVTRSGDKYRSEVVEDVRFVPLINGELA</sequence>
<comment type="function">
    <text evidence="1">Catalyzes the methyl esterification of L-isoaspartyl residues in peptides and proteins that result from spontaneous decomposition of normal L-aspartyl and L-asparaginyl residues. It plays a role in the repair and/or degradation of damaged proteins.</text>
</comment>
<comment type="catalytic activity">
    <reaction evidence="1">
        <text>[protein]-L-isoaspartate + S-adenosyl-L-methionine = [protein]-L-isoaspartate alpha-methyl ester + S-adenosyl-L-homocysteine</text>
        <dbReference type="Rhea" id="RHEA:12705"/>
        <dbReference type="Rhea" id="RHEA-COMP:12143"/>
        <dbReference type="Rhea" id="RHEA-COMP:12144"/>
        <dbReference type="ChEBI" id="CHEBI:57856"/>
        <dbReference type="ChEBI" id="CHEBI:59789"/>
        <dbReference type="ChEBI" id="CHEBI:90596"/>
        <dbReference type="ChEBI" id="CHEBI:90598"/>
        <dbReference type="EC" id="2.1.1.77"/>
    </reaction>
</comment>
<comment type="subcellular location">
    <subcellularLocation>
        <location evidence="1">Cytoplasm</location>
    </subcellularLocation>
</comment>
<comment type="similarity">
    <text evidence="1">Belongs to the methyltransferase superfamily. L-isoaspartyl/D-aspartyl protein methyltransferase family.</text>
</comment>
<reference key="1">
    <citation type="submission" date="2008-01" db="EMBL/GenBank/DDBJ databases">
        <title>Complete sequence of Shewanella halifaxensis HAW-EB4.</title>
        <authorList>
            <consortium name="US DOE Joint Genome Institute"/>
            <person name="Copeland A."/>
            <person name="Lucas S."/>
            <person name="Lapidus A."/>
            <person name="Glavina del Rio T."/>
            <person name="Dalin E."/>
            <person name="Tice H."/>
            <person name="Bruce D."/>
            <person name="Goodwin L."/>
            <person name="Pitluck S."/>
            <person name="Sims D."/>
            <person name="Brettin T."/>
            <person name="Detter J.C."/>
            <person name="Han C."/>
            <person name="Kuske C.R."/>
            <person name="Schmutz J."/>
            <person name="Larimer F."/>
            <person name="Land M."/>
            <person name="Hauser L."/>
            <person name="Kyrpides N."/>
            <person name="Kim E."/>
            <person name="Zhao J.-S."/>
            <person name="Richardson P."/>
        </authorList>
    </citation>
    <scope>NUCLEOTIDE SEQUENCE [LARGE SCALE GENOMIC DNA]</scope>
    <source>
        <strain>HAW-EB4</strain>
    </source>
</reference>
<feature type="chain" id="PRO_1000093285" description="Protein-L-isoaspartate O-methyltransferase">
    <location>
        <begin position="1"/>
        <end position="211"/>
    </location>
</feature>
<feature type="active site" evidence="1">
    <location>
        <position position="62"/>
    </location>
</feature>
<proteinExistence type="inferred from homology"/>
<organism>
    <name type="scientific">Shewanella halifaxensis (strain HAW-EB4)</name>
    <dbReference type="NCBI Taxonomy" id="458817"/>
    <lineage>
        <taxon>Bacteria</taxon>
        <taxon>Pseudomonadati</taxon>
        <taxon>Pseudomonadota</taxon>
        <taxon>Gammaproteobacteria</taxon>
        <taxon>Alteromonadales</taxon>
        <taxon>Shewanellaceae</taxon>
        <taxon>Shewanella</taxon>
    </lineage>
</organism>
<name>PIMT_SHEHH</name>
<keyword id="KW-0963">Cytoplasm</keyword>
<keyword id="KW-0489">Methyltransferase</keyword>
<keyword id="KW-0949">S-adenosyl-L-methionine</keyword>
<keyword id="KW-0808">Transferase</keyword>
<accession>B0TK10</accession>
<gene>
    <name evidence="1" type="primary">pcm</name>
    <name type="ordered locus">Shal_1228</name>
</gene>